<keyword id="KW-1003">Cell membrane</keyword>
<keyword id="KW-0963">Cytoplasm</keyword>
<keyword id="KW-0342">GTP-binding</keyword>
<keyword id="KW-0472">Membrane</keyword>
<keyword id="KW-0547">Nucleotide-binding</keyword>
<keyword id="KW-1185">Reference proteome</keyword>
<keyword id="KW-0690">Ribosome biogenesis</keyword>
<keyword id="KW-0694">RNA-binding</keyword>
<keyword id="KW-0699">rRNA-binding</keyword>
<reference key="1">
    <citation type="journal article" date="2007" name="J. Bacteriol.">
        <title>Genome sequence of Avery's virulent serotype 2 strain D39 of Streptococcus pneumoniae and comparison with that of unencapsulated laboratory strain R6.</title>
        <authorList>
            <person name="Lanie J.A."/>
            <person name="Ng W.-L."/>
            <person name="Kazmierczak K.M."/>
            <person name="Andrzejewski T.M."/>
            <person name="Davidsen T.M."/>
            <person name="Wayne K.J."/>
            <person name="Tettelin H."/>
            <person name="Glass J.I."/>
            <person name="Winkler M.E."/>
        </authorList>
    </citation>
    <scope>NUCLEOTIDE SEQUENCE [LARGE SCALE GENOMIC DNA]</scope>
    <source>
        <strain>D39 / NCTC 7466</strain>
    </source>
</reference>
<proteinExistence type="inferred from homology"/>
<comment type="function">
    <text evidence="1">An essential GTPase that binds both GDP and GTP, with rapid nucleotide exchange. Plays a role in 16S rRNA processing and 30S ribosomal subunit biogenesis and possibly also in cell cycle regulation and energy metabolism.</text>
</comment>
<comment type="subunit">
    <text evidence="1">Monomer.</text>
</comment>
<comment type="subcellular location">
    <subcellularLocation>
        <location>Cytoplasm</location>
    </subcellularLocation>
    <subcellularLocation>
        <location evidence="1">Cell membrane</location>
        <topology evidence="1">Peripheral membrane protein</topology>
    </subcellularLocation>
</comment>
<comment type="similarity">
    <text evidence="1 2">Belongs to the TRAFAC class TrmE-Era-EngA-EngB-Septin-like GTPase superfamily. Era GTPase family.</text>
</comment>
<feature type="chain" id="PRO_1000079750" description="GTPase Era">
    <location>
        <begin position="1"/>
        <end position="299"/>
    </location>
</feature>
<feature type="domain" description="Era-type G" evidence="2">
    <location>
        <begin position="4"/>
        <end position="171"/>
    </location>
</feature>
<feature type="domain" description="KH type-2" evidence="1">
    <location>
        <begin position="202"/>
        <end position="280"/>
    </location>
</feature>
<feature type="region of interest" description="G1" evidence="2">
    <location>
        <begin position="12"/>
        <end position="19"/>
    </location>
</feature>
<feature type="region of interest" description="G2" evidence="2">
    <location>
        <begin position="38"/>
        <end position="42"/>
    </location>
</feature>
<feature type="region of interest" description="G3" evidence="2">
    <location>
        <begin position="59"/>
        <end position="62"/>
    </location>
</feature>
<feature type="region of interest" description="G4" evidence="2">
    <location>
        <begin position="121"/>
        <end position="124"/>
    </location>
</feature>
<feature type="region of interest" description="G5" evidence="2">
    <location>
        <begin position="150"/>
        <end position="152"/>
    </location>
</feature>
<feature type="binding site" evidence="1">
    <location>
        <begin position="12"/>
        <end position="19"/>
    </location>
    <ligand>
        <name>GTP</name>
        <dbReference type="ChEBI" id="CHEBI:37565"/>
    </ligand>
</feature>
<feature type="binding site" evidence="1">
    <location>
        <begin position="59"/>
        <end position="63"/>
    </location>
    <ligand>
        <name>GTP</name>
        <dbReference type="ChEBI" id="CHEBI:37565"/>
    </ligand>
</feature>
<feature type="binding site" evidence="1">
    <location>
        <begin position="121"/>
        <end position="124"/>
    </location>
    <ligand>
        <name>GTP</name>
        <dbReference type="ChEBI" id="CHEBI:37565"/>
    </ligand>
</feature>
<dbReference type="EMBL" id="CP000410">
    <property type="protein sequence ID" value="ABJ55058.1"/>
    <property type="molecule type" value="Genomic_DNA"/>
</dbReference>
<dbReference type="RefSeq" id="WP_000143265.1">
    <property type="nucleotide sequence ID" value="NZ_JAMLJR010000004.1"/>
</dbReference>
<dbReference type="SMR" id="Q04KV9"/>
<dbReference type="PaxDb" id="373153-SPD_0857"/>
<dbReference type="GeneID" id="45653689"/>
<dbReference type="KEGG" id="spd:SPD_0857"/>
<dbReference type="eggNOG" id="COG1159">
    <property type="taxonomic scope" value="Bacteria"/>
</dbReference>
<dbReference type="HOGENOM" id="CLU_038009_1_0_9"/>
<dbReference type="BioCyc" id="SPNE373153:G1G6V-940-MONOMER"/>
<dbReference type="Proteomes" id="UP000001452">
    <property type="component" value="Chromosome"/>
</dbReference>
<dbReference type="GO" id="GO:0005829">
    <property type="term" value="C:cytosol"/>
    <property type="evidence" value="ECO:0007669"/>
    <property type="project" value="TreeGrafter"/>
</dbReference>
<dbReference type="GO" id="GO:0005886">
    <property type="term" value="C:plasma membrane"/>
    <property type="evidence" value="ECO:0007669"/>
    <property type="project" value="UniProtKB-SubCell"/>
</dbReference>
<dbReference type="GO" id="GO:0005525">
    <property type="term" value="F:GTP binding"/>
    <property type="evidence" value="ECO:0007669"/>
    <property type="project" value="UniProtKB-UniRule"/>
</dbReference>
<dbReference type="GO" id="GO:0003924">
    <property type="term" value="F:GTPase activity"/>
    <property type="evidence" value="ECO:0007669"/>
    <property type="project" value="UniProtKB-UniRule"/>
</dbReference>
<dbReference type="GO" id="GO:0043024">
    <property type="term" value="F:ribosomal small subunit binding"/>
    <property type="evidence" value="ECO:0007669"/>
    <property type="project" value="TreeGrafter"/>
</dbReference>
<dbReference type="GO" id="GO:0070181">
    <property type="term" value="F:small ribosomal subunit rRNA binding"/>
    <property type="evidence" value="ECO:0007669"/>
    <property type="project" value="UniProtKB-UniRule"/>
</dbReference>
<dbReference type="GO" id="GO:0000028">
    <property type="term" value="P:ribosomal small subunit assembly"/>
    <property type="evidence" value="ECO:0007669"/>
    <property type="project" value="TreeGrafter"/>
</dbReference>
<dbReference type="CDD" id="cd04163">
    <property type="entry name" value="Era"/>
    <property type="match status" value="1"/>
</dbReference>
<dbReference type="CDD" id="cd22534">
    <property type="entry name" value="KH-II_Era"/>
    <property type="match status" value="1"/>
</dbReference>
<dbReference type="FunFam" id="3.30.300.20:FF:000003">
    <property type="entry name" value="GTPase Era"/>
    <property type="match status" value="1"/>
</dbReference>
<dbReference type="FunFam" id="3.40.50.300:FF:000094">
    <property type="entry name" value="GTPase Era"/>
    <property type="match status" value="1"/>
</dbReference>
<dbReference type="Gene3D" id="3.30.300.20">
    <property type="match status" value="1"/>
</dbReference>
<dbReference type="Gene3D" id="3.40.50.300">
    <property type="entry name" value="P-loop containing nucleotide triphosphate hydrolases"/>
    <property type="match status" value="1"/>
</dbReference>
<dbReference type="HAMAP" id="MF_00367">
    <property type="entry name" value="GTPase_Era"/>
    <property type="match status" value="1"/>
</dbReference>
<dbReference type="InterPro" id="IPR030388">
    <property type="entry name" value="G_ERA_dom"/>
</dbReference>
<dbReference type="InterPro" id="IPR006073">
    <property type="entry name" value="GTP-bd"/>
</dbReference>
<dbReference type="InterPro" id="IPR005662">
    <property type="entry name" value="GTPase_Era-like"/>
</dbReference>
<dbReference type="InterPro" id="IPR015946">
    <property type="entry name" value="KH_dom-like_a/b"/>
</dbReference>
<dbReference type="InterPro" id="IPR004044">
    <property type="entry name" value="KH_dom_type_2"/>
</dbReference>
<dbReference type="InterPro" id="IPR009019">
    <property type="entry name" value="KH_sf_prok-type"/>
</dbReference>
<dbReference type="InterPro" id="IPR027417">
    <property type="entry name" value="P-loop_NTPase"/>
</dbReference>
<dbReference type="InterPro" id="IPR005225">
    <property type="entry name" value="Small_GTP-bd"/>
</dbReference>
<dbReference type="NCBIfam" id="TIGR00436">
    <property type="entry name" value="era"/>
    <property type="match status" value="1"/>
</dbReference>
<dbReference type="NCBIfam" id="NF000908">
    <property type="entry name" value="PRK00089.1"/>
    <property type="match status" value="1"/>
</dbReference>
<dbReference type="NCBIfam" id="TIGR00231">
    <property type="entry name" value="small_GTP"/>
    <property type="match status" value="1"/>
</dbReference>
<dbReference type="PANTHER" id="PTHR42698">
    <property type="entry name" value="GTPASE ERA"/>
    <property type="match status" value="1"/>
</dbReference>
<dbReference type="PANTHER" id="PTHR42698:SF1">
    <property type="entry name" value="GTPASE ERA, MITOCHONDRIAL"/>
    <property type="match status" value="1"/>
</dbReference>
<dbReference type="Pfam" id="PF07650">
    <property type="entry name" value="KH_2"/>
    <property type="match status" value="1"/>
</dbReference>
<dbReference type="Pfam" id="PF01926">
    <property type="entry name" value="MMR_HSR1"/>
    <property type="match status" value="1"/>
</dbReference>
<dbReference type="SUPFAM" id="SSF52540">
    <property type="entry name" value="P-loop containing nucleoside triphosphate hydrolases"/>
    <property type="match status" value="1"/>
</dbReference>
<dbReference type="SUPFAM" id="SSF54814">
    <property type="entry name" value="Prokaryotic type KH domain (KH-domain type II)"/>
    <property type="match status" value="1"/>
</dbReference>
<dbReference type="PROSITE" id="PS51713">
    <property type="entry name" value="G_ERA"/>
    <property type="match status" value="1"/>
</dbReference>
<dbReference type="PROSITE" id="PS50823">
    <property type="entry name" value="KH_TYPE_2"/>
    <property type="match status" value="1"/>
</dbReference>
<protein>
    <recommendedName>
        <fullName evidence="1">GTPase Era</fullName>
    </recommendedName>
</protein>
<gene>
    <name evidence="1" type="primary">era</name>
    <name type="ordered locus">SPD_0857</name>
</gene>
<evidence type="ECO:0000255" key="1">
    <source>
        <dbReference type="HAMAP-Rule" id="MF_00367"/>
    </source>
</evidence>
<evidence type="ECO:0000255" key="2">
    <source>
        <dbReference type="PROSITE-ProRule" id="PRU01050"/>
    </source>
</evidence>
<name>ERA_STRP2</name>
<accession>Q04KV9</accession>
<sequence length="299" mass="34010">MTFKSGFVAILGRPNVGKSTFLNHVMGQKIAIMSDKAQTTRNKIMGIYTTDKEQIVFIDTPGIHKPKTALGDFMVESAYSTLREVDTVLFMVPADEARGKGDDMIIERLKAAKVPVILVVNKIDKVHPDQLLSQIDDFRNQMDFKEIVPISALQGNNVSRLVDILSENLDEGFQYFPSDQITDHPERFLVSEMVREKVLHLTREEIPHSVAVVVDSMKRDEETDKVHIRATIMVERDSQKGIIIGKGGAMLKKIGSMARRDIELMLGDKVFLETWVKVKKNWRDKKLDLADFGYNEREY</sequence>
<organism>
    <name type="scientific">Streptococcus pneumoniae serotype 2 (strain D39 / NCTC 7466)</name>
    <dbReference type="NCBI Taxonomy" id="373153"/>
    <lineage>
        <taxon>Bacteria</taxon>
        <taxon>Bacillati</taxon>
        <taxon>Bacillota</taxon>
        <taxon>Bacilli</taxon>
        <taxon>Lactobacillales</taxon>
        <taxon>Streptococcaceae</taxon>
        <taxon>Streptococcus</taxon>
    </lineage>
</organism>